<protein>
    <recommendedName>
        <fullName evidence="1">Large ribosomal subunit protein bL35</fullName>
    </recommendedName>
    <alternativeName>
        <fullName evidence="2">50S ribosomal protein L35</fullName>
    </alternativeName>
</protein>
<reference key="1">
    <citation type="submission" date="2005-07" db="EMBL/GenBank/DDBJ databases">
        <title>Complete sequence of Synechococcus sp. CC9605.</title>
        <authorList>
            <consortium name="US DOE Joint Genome Institute"/>
            <person name="Copeland A."/>
            <person name="Lucas S."/>
            <person name="Lapidus A."/>
            <person name="Barry K."/>
            <person name="Detter J.C."/>
            <person name="Glavina T."/>
            <person name="Hammon N."/>
            <person name="Israni S."/>
            <person name="Pitluck S."/>
            <person name="Schmutz J."/>
            <person name="Martinez M."/>
            <person name="Larimer F."/>
            <person name="Land M."/>
            <person name="Kyrpides N."/>
            <person name="Ivanova N."/>
            <person name="Richardson P."/>
        </authorList>
    </citation>
    <scope>NUCLEOTIDE SEQUENCE [LARGE SCALE GENOMIC DNA]</scope>
    <source>
        <strain>CC9605</strain>
    </source>
</reference>
<proteinExistence type="inferred from homology"/>
<evidence type="ECO:0000255" key="1">
    <source>
        <dbReference type="HAMAP-Rule" id="MF_00514"/>
    </source>
</evidence>
<evidence type="ECO:0000305" key="2"/>
<feature type="chain" id="PRO_0000258771" description="Large ribosomal subunit protein bL35">
    <location>
        <begin position="1"/>
        <end position="65"/>
    </location>
</feature>
<gene>
    <name evidence="1" type="primary">rpmI</name>
    <name evidence="1" type="synonym">rpl35</name>
    <name type="ordered locus">Syncc9605_0058</name>
</gene>
<keyword id="KW-0687">Ribonucleoprotein</keyword>
<keyword id="KW-0689">Ribosomal protein</keyword>
<organism>
    <name type="scientific">Synechococcus sp. (strain CC9605)</name>
    <dbReference type="NCBI Taxonomy" id="110662"/>
    <lineage>
        <taxon>Bacteria</taxon>
        <taxon>Bacillati</taxon>
        <taxon>Cyanobacteriota</taxon>
        <taxon>Cyanophyceae</taxon>
        <taxon>Synechococcales</taxon>
        <taxon>Synechococcaceae</taxon>
        <taxon>Synechococcus</taxon>
    </lineage>
</organism>
<sequence>MPKLKTRKAAAKRFKATGTGKFLRRRAFRNHLLDHKTPKQKRHLATKAVVDRTDEERVTLMMPYA</sequence>
<comment type="similarity">
    <text evidence="1">Belongs to the bacterial ribosomal protein bL35 family.</text>
</comment>
<dbReference type="EMBL" id="CP000110">
    <property type="protein sequence ID" value="ABB33837.1"/>
    <property type="molecule type" value="Genomic_DNA"/>
</dbReference>
<dbReference type="RefSeq" id="WP_006852081.1">
    <property type="nucleotide sequence ID" value="NC_007516.1"/>
</dbReference>
<dbReference type="SMR" id="Q3ANJ5"/>
<dbReference type="STRING" id="110662.Syncc9605_0058"/>
<dbReference type="KEGG" id="syd:Syncc9605_0058"/>
<dbReference type="eggNOG" id="COG0291">
    <property type="taxonomic scope" value="Bacteria"/>
</dbReference>
<dbReference type="HOGENOM" id="CLU_169643_4_0_3"/>
<dbReference type="OrthoDB" id="47476at2"/>
<dbReference type="GO" id="GO:0022625">
    <property type="term" value="C:cytosolic large ribosomal subunit"/>
    <property type="evidence" value="ECO:0007669"/>
    <property type="project" value="TreeGrafter"/>
</dbReference>
<dbReference type="GO" id="GO:0003735">
    <property type="term" value="F:structural constituent of ribosome"/>
    <property type="evidence" value="ECO:0007669"/>
    <property type="project" value="InterPro"/>
</dbReference>
<dbReference type="GO" id="GO:0006412">
    <property type="term" value="P:translation"/>
    <property type="evidence" value="ECO:0007669"/>
    <property type="project" value="UniProtKB-UniRule"/>
</dbReference>
<dbReference type="FunFam" id="4.10.410.60:FF:000001">
    <property type="entry name" value="50S ribosomal protein L35"/>
    <property type="match status" value="1"/>
</dbReference>
<dbReference type="Gene3D" id="4.10.410.60">
    <property type="match status" value="1"/>
</dbReference>
<dbReference type="HAMAP" id="MF_00514">
    <property type="entry name" value="Ribosomal_bL35"/>
    <property type="match status" value="1"/>
</dbReference>
<dbReference type="InterPro" id="IPR001706">
    <property type="entry name" value="Ribosomal_bL35"/>
</dbReference>
<dbReference type="InterPro" id="IPR021137">
    <property type="entry name" value="Ribosomal_bL35-like"/>
</dbReference>
<dbReference type="InterPro" id="IPR018265">
    <property type="entry name" value="Ribosomal_bL35_CS"/>
</dbReference>
<dbReference type="InterPro" id="IPR037229">
    <property type="entry name" value="Ribosomal_bL35_sf"/>
</dbReference>
<dbReference type="NCBIfam" id="TIGR00001">
    <property type="entry name" value="rpmI_bact"/>
    <property type="match status" value="1"/>
</dbReference>
<dbReference type="PANTHER" id="PTHR33343">
    <property type="entry name" value="54S RIBOSOMAL PROTEIN BL35M"/>
    <property type="match status" value="1"/>
</dbReference>
<dbReference type="PANTHER" id="PTHR33343:SF1">
    <property type="entry name" value="LARGE RIBOSOMAL SUBUNIT PROTEIN BL35M"/>
    <property type="match status" value="1"/>
</dbReference>
<dbReference type="Pfam" id="PF01632">
    <property type="entry name" value="Ribosomal_L35p"/>
    <property type="match status" value="1"/>
</dbReference>
<dbReference type="PRINTS" id="PR00064">
    <property type="entry name" value="RIBOSOMALL35"/>
</dbReference>
<dbReference type="SUPFAM" id="SSF143034">
    <property type="entry name" value="L35p-like"/>
    <property type="match status" value="1"/>
</dbReference>
<dbReference type="PROSITE" id="PS00936">
    <property type="entry name" value="RIBOSOMAL_L35"/>
    <property type="match status" value="1"/>
</dbReference>
<name>RL35_SYNSC</name>
<accession>Q3ANJ5</accession>